<feature type="signal peptide" evidence="2">
    <location>
        <begin position="1"/>
        <end position="18"/>
    </location>
</feature>
<feature type="chain" id="PRO_0000394349" description="Probable pectin lyase C">
    <location>
        <begin position="19"/>
        <end position="378"/>
    </location>
</feature>
<feature type="active site" evidence="2">
    <location>
        <position position="250"/>
    </location>
</feature>
<feature type="glycosylation site" description="N-linked (GlcNAc...) asparagine" evidence="2">
    <location>
        <position position="123"/>
    </location>
</feature>
<feature type="disulfide bond" evidence="1">
    <location>
        <begin position="81"/>
        <end position="100"/>
    </location>
</feature>
<feature type="disulfide bond" evidence="1">
    <location>
        <begin position="90"/>
        <end position="220"/>
    </location>
</feature>
<feature type="disulfide bond" evidence="1">
    <location>
        <begin position="316"/>
        <end position="324"/>
    </location>
</feature>
<reference key="1">
    <citation type="submission" date="2004-11" db="EMBL/GenBank/DDBJ databases">
        <title>Structure of a fourth Aspergillus niger pectin lyase gene, pelC, and a sequence comparison with other pectin and pectate lyases.</title>
        <authorList>
            <person name="Kusters-van Someren M.A."/>
            <person name="Visser J."/>
        </authorList>
    </citation>
    <scope>NUCLEOTIDE SEQUENCE [GENOMIC DNA]</scope>
    <source>
        <strain>ATCC 9029 / NRRL 3 / CBS 120.49 / DSM 2466 / N400 / FGSC 732</strain>
    </source>
</reference>
<accession>Q5MBK3</accession>
<protein>
    <recommendedName>
        <fullName>Probable pectin lyase C</fullName>
        <shortName>PLC</shortName>
        <ecNumber>4.2.2.10</ecNumber>
    </recommendedName>
</protein>
<evidence type="ECO:0000250" key="1"/>
<evidence type="ECO:0000255" key="2"/>
<evidence type="ECO:0000305" key="3"/>
<dbReference type="EC" id="4.2.2.10"/>
<dbReference type="EMBL" id="AY839647">
    <property type="protein sequence ID" value="AAW03313.1"/>
    <property type="molecule type" value="Genomic_DNA"/>
</dbReference>
<dbReference type="SMR" id="Q5MBK3"/>
<dbReference type="CAZy" id="PL1">
    <property type="family name" value="Polysaccharide Lyase Family 1"/>
</dbReference>
<dbReference type="GlyCosmos" id="Q5MBK3">
    <property type="glycosylation" value="1 site, No reported glycans"/>
</dbReference>
<dbReference type="PaxDb" id="5061-CADANGAP00008580"/>
<dbReference type="VEuPathDB" id="FungiDB:An11g04030"/>
<dbReference type="VEuPathDB" id="FungiDB:ASPNIDRAFT2_1154296"/>
<dbReference type="VEuPathDB" id="FungiDB:ATCC64974_90160"/>
<dbReference type="VEuPathDB" id="FungiDB:M747DRAFT_314510"/>
<dbReference type="eggNOG" id="ENOG502SIPU">
    <property type="taxonomic scope" value="Eukaryota"/>
</dbReference>
<dbReference type="GO" id="GO:0005576">
    <property type="term" value="C:extracellular region"/>
    <property type="evidence" value="ECO:0007669"/>
    <property type="project" value="UniProtKB-SubCell"/>
</dbReference>
<dbReference type="GO" id="GO:0030570">
    <property type="term" value="F:pectate lyase activity"/>
    <property type="evidence" value="ECO:0007669"/>
    <property type="project" value="InterPro"/>
</dbReference>
<dbReference type="GO" id="GO:0047490">
    <property type="term" value="F:pectin lyase activity"/>
    <property type="evidence" value="ECO:0000250"/>
    <property type="project" value="UniProtKB"/>
</dbReference>
<dbReference type="GO" id="GO:0071555">
    <property type="term" value="P:cell wall organization"/>
    <property type="evidence" value="ECO:0007669"/>
    <property type="project" value="UniProtKB-KW"/>
</dbReference>
<dbReference type="GO" id="GO:0045490">
    <property type="term" value="P:pectin catabolic process"/>
    <property type="evidence" value="ECO:0000250"/>
    <property type="project" value="UniProtKB"/>
</dbReference>
<dbReference type="FunFam" id="2.160.20.10:FF:000003">
    <property type="entry name" value="Pectin lyase F"/>
    <property type="match status" value="1"/>
</dbReference>
<dbReference type="Gene3D" id="2.160.20.10">
    <property type="entry name" value="Single-stranded right-handed beta-helix, Pectin lyase-like"/>
    <property type="match status" value="1"/>
</dbReference>
<dbReference type="InterPro" id="IPR002022">
    <property type="entry name" value="Pec_lyase"/>
</dbReference>
<dbReference type="InterPro" id="IPR012334">
    <property type="entry name" value="Pectin_lyas_fold"/>
</dbReference>
<dbReference type="InterPro" id="IPR011050">
    <property type="entry name" value="Pectin_lyase_fold/virulence"/>
</dbReference>
<dbReference type="InterPro" id="IPR045032">
    <property type="entry name" value="PEL"/>
</dbReference>
<dbReference type="PANTHER" id="PTHR31683">
    <property type="entry name" value="PECTATE LYASE 18-RELATED"/>
    <property type="match status" value="1"/>
</dbReference>
<dbReference type="PANTHER" id="PTHR31683:SF16">
    <property type="entry name" value="PECTIN LYASE A-RELATED"/>
    <property type="match status" value="1"/>
</dbReference>
<dbReference type="Pfam" id="PF00544">
    <property type="entry name" value="Pectate_lyase_4"/>
    <property type="match status" value="1"/>
</dbReference>
<dbReference type="SMART" id="SM00656">
    <property type="entry name" value="Amb_all"/>
    <property type="match status" value="1"/>
</dbReference>
<dbReference type="SUPFAM" id="SSF51126">
    <property type="entry name" value="Pectin lyase-like"/>
    <property type="match status" value="1"/>
</dbReference>
<organism>
    <name type="scientific">Aspergillus niger</name>
    <dbReference type="NCBI Taxonomy" id="5061"/>
    <lineage>
        <taxon>Eukaryota</taxon>
        <taxon>Fungi</taxon>
        <taxon>Dikarya</taxon>
        <taxon>Ascomycota</taxon>
        <taxon>Pezizomycotina</taxon>
        <taxon>Eurotiomycetes</taxon>
        <taxon>Eurotiomycetidae</taxon>
        <taxon>Eurotiales</taxon>
        <taxon>Aspergillaceae</taxon>
        <taxon>Aspergillus</taxon>
        <taxon>Aspergillus subgen. Circumdati</taxon>
    </lineage>
</organism>
<proteinExistence type="inferred from homology"/>
<sequence>MKVPFLQLLCLNAALASANVVQGAAQGFAAGVTGGGDITPSYPKTNEELVSLLESDEPQVVVLTKTFDFIGTEGTTTEDGCAPWGTGKSCQLAINSNGWCGKNPVVTITYDNAAKNGIHIKSNKTLVGEGDKGVLSGKGLYFEGGVSNIIVQNIKITNLNPGFVWGGDAFTFFGADLIWIDHCETSLTGRQHYVTGFHPNTRMTWSNNFLNGVTTHSAGCDDHHYWTMELVGPGDEITFQNNYVYHTTGRGPALSGTTLFHAVNSVWSSIPGHAIEGGDKGRGLFEGCFFEDVVEIAPAKPENQLFSASEANAASCKSALGRACQANGYSKSGAFGSSETGFFKDFAGLTIAPAGSATDALAYVPKNCGIGRLESCDA</sequence>
<name>PELC_ASPNG</name>
<gene>
    <name type="primary">pelC</name>
</gene>
<comment type="function">
    <text evidence="1">Pectinolytic enzymes consist of four classes of enzymes: pectin lyase, polygalacturonase, pectin methylesterase and rhamnogalacturonase. Among pectinolytic enzymes, pectin lyase is the most important in depolymerization of pectin, since it cleaves internal glycosidic bonds of highly methylated pectins (By similarity).</text>
</comment>
<comment type="catalytic activity">
    <reaction>
        <text>Eliminative cleavage of (1-&gt;4)-alpha-D-galacturonan methyl ester to give oligosaccharides with 4-deoxy-6-O-methyl-alpha-D-galact-4-enuronosyl groups at their non-reducing ends.</text>
        <dbReference type="EC" id="4.2.2.10"/>
    </reaction>
</comment>
<comment type="subcellular location">
    <subcellularLocation>
        <location evidence="1">Secreted</location>
    </subcellularLocation>
</comment>
<comment type="similarity">
    <text evidence="3">Belongs to the polysaccharide lyase 1 family.</text>
</comment>
<keyword id="KW-0119">Carbohydrate metabolism</keyword>
<keyword id="KW-0961">Cell wall biogenesis/degradation</keyword>
<keyword id="KW-1015">Disulfide bond</keyword>
<keyword id="KW-0325">Glycoprotein</keyword>
<keyword id="KW-0456">Lyase</keyword>
<keyword id="KW-0624">Polysaccharide degradation</keyword>
<keyword id="KW-0964">Secreted</keyword>
<keyword id="KW-0732">Signal</keyword>